<sequence length="905" mass="101628">MSAKLLYNLSDENPNLNKQFGCMNGIFQVFYRQHCPATPVTVSGGAEKSLPPGERRGSVGETNMESDKETERSSTKKKKSAAKEKHRVSFESSSRPSFSSSPRSSSFSSAEVSTTASQFDQPGENLIREQPNGGLMMPYDLKELVKGSINREIRTRGEEASFTQQQQPISARSSMLLLKESSLRSPCRSSNEWNEGRGAAMKFKESHRLSYDEREMRNNGFRVGSKLKETPRLSLDSRSNSFRSPRADAARSSCPEEPATMTHRRSSSSVVAKLMGLEVIADNSDTEQRRENRFCDSPRPMSRVEPTALQRSRSVDSIKRIPASAASKFPMEPAPWKQMKAGDSALTVYGEIQKRLTQLEFKKSGKDLRALKQILEAMEKTQQLIDESRDDGTLSTTTLMQRTHKPVSAATSPARNFKSSSIVVMKSAAPVSTSPLPQNVTLPNVKVGNSRQTRKVTSGKQNAMDLTPRPGLYKGQLDSTKSNSPKTVRSRQALAADAGSMTKSGRSQQHSVSPRTQPKKLGFEKQTRPTTPKSEPGKRQLGRQQTEVASPRRKQMIKPHSTLQQPDDRLSDARSDLRSLRSDSNISLGSNVDIEVTSRHRLERNCDFPEQHTPKQRSPDFGIKQDRPSLKPLKVTVEQPSPVSVLDAVFDEEDSPSPVRKISLSFKEEDALRSEESEWINKPTSFCRSVPFPQSNRGPMKPSSDHFECSPEEGADFKSGNHKYILEILLASGILRDLEYSMISFQLHQTRLPINPGLFFILEQNKASNVTLPDNKHRGRGFRQQQTNPTETIRRKLVFDTVNEILARKFTAEGCIKPRLIANPLKKLEKISKEEQLLQTLCSEIDRLQQNNSNCILEDDEEDIIWEDLQSQSMNLKEFEGETPGIVLDIERMIFRDLVNEVCFC</sequence>
<gene>
    <name type="primary">LNG2</name>
    <name type="synonym">TRM1</name>
    <name type="ordered locus">At3g02170</name>
    <name type="ORF">F14P3.18</name>
    <name type="ORF">F1C9.4</name>
</gene>
<evidence type="ECO:0000256" key="1">
    <source>
        <dbReference type="SAM" id="MobiDB-lite"/>
    </source>
</evidence>
<evidence type="ECO:0000269" key="2">
    <source>
    </source>
</evidence>
<evidence type="ECO:0000269" key="3">
    <source>
    </source>
</evidence>
<evidence type="ECO:0000305" key="4"/>
<dbReference type="EMBL" id="AC009755">
    <property type="protein sequence ID" value="AAF02120.1"/>
    <property type="molecule type" value="Genomic_DNA"/>
</dbReference>
<dbReference type="EMBL" id="AC011664">
    <property type="protein sequence ID" value="AAF14821.1"/>
    <property type="molecule type" value="Genomic_DNA"/>
</dbReference>
<dbReference type="EMBL" id="CP002686">
    <property type="protein sequence ID" value="AEE73772.1"/>
    <property type="molecule type" value="Genomic_DNA"/>
</dbReference>
<dbReference type="EMBL" id="AY056131">
    <property type="protein sequence ID" value="AAL07210.1"/>
    <property type="molecule type" value="mRNA"/>
</dbReference>
<dbReference type="EMBL" id="AY150501">
    <property type="protein sequence ID" value="AAN13017.1"/>
    <property type="molecule type" value="mRNA"/>
</dbReference>
<dbReference type="EMBL" id="AY086190">
    <property type="protein sequence ID" value="AAM64269.1"/>
    <property type="status" value="ALT_INIT"/>
    <property type="molecule type" value="mRNA"/>
</dbReference>
<dbReference type="RefSeq" id="NP_566165.2">
    <property type="nucleotide sequence ID" value="NM_111084.4"/>
</dbReference>
<dbReference type="SMR" id="Q9S823"/>
<dbReference type="BioGRID" id="6612">
    <property type="interactions" value="1"/>
</dbReference>
<dbReference type="FunCoup" id="Q9S823">
    <property type="interactions" value="2"/>
</dbReference>
<dbReference type="STRING" id="3702.Q9S823"/>
<dbReference type="iPTMnet" id="Q9S823"/>
<dbReference type="PaxDb" id="3702-AT3G02170.1"/>
<dbReference type="ProteomicsDB" id="238451"/>
<dbReference type="EnsemblPlants" id="AT3G02170.1">
    <property type="protein sequence ID" value="AT3G02170.1"/>
    <property type="gene ID" value="AT3G02170"/>
</dbReference>
<dbReference type="GeneID" id="821279"/>
<dbReference type="Gramene" id="AT3G02170.1">
    <property type="protein sequence ID" value="AT3G02170.1"/>
    <property type="gene ID" value="AT3G02170"/>
</dbReference>
<dbReference type="KEGG" id="ath:AT3G02170"/>
<dbReference type="Araport" id="AT3G02170"/>
<dbReference type="TAIR" id="AT3G02170">
    <property type="gene designation" value="LNG2"/>
</dbReference>
<dbReference type="eggNOG" id="ENOG502R7XZ">
    <property type="taxonomic scope" value="Eukaryota"/>
</dbReference>
<dbReference type="HOGENOM" id="CLU_007647_0_0_1"/>
<dbReference type="InParanoid" id="Q9S823"/>
<dbReference type="OMA" id="QPPIVVM"/>
<dbReference type="PhylomeDB" id="Q9S823"/>
<dbReference type="PRO" id="PR:Q9S823"/>
<dbReference type="Proteomes" id="UP000006548">
    <property type="component" value="Chromosome 3"/>
</dbReference>
<dbReference type="ExpressionAtlas" id="Q9S823">
    <property type="expression patterns" value="baseline and differential"/>
</dbReference>
<dbReference type="GO" id="GO:0005856">
    <property type="term" value="C:cytoskeleton"/>
    <property type="evidence" value="ECO:0007669"/>
    <property type="project" value="UniProtKB-SubCell"/>
</dbReference>
<dbReference type="GO" id="GO:0005829">
    <property type="term" value="C:cytosol"/>
    <property type="evidence" value="ECO:0007005"/>
    <property type="project" value="TAIR"/>
</dbReference>
<dbReference type="GO" id="GO:0008017">
    <property type="term" value="F:microtubule binding"/>
    <property type="evidence" value="ECO:0000314"/>
    <property type="project" value="TAIR"/>
</dbReference>
<dbReference type="GO" id="GO:0051513">
    <property type="term" value="P:regulation of monopolar cell growth"/>
    <property type="evidence" value="ECO:0000315"/>
    <property type="project" value="TAIR"/>
</dbReference>
<dbReference type="GO" id="GO:0009826">
    <property type="term" value="P:unidimensional cell growth"/>
    <property type="evidence" value="ECO:0000316"/>
    <property type="project" value="TAIR"/>
</dbReference>
<dbReference type="InterPro" id="IPR025486">
    <property type="entry name" value="DUF4378"/>
</dbReference>
<dbReference type="InterPro" id="IPR033334">
    <property type="entry name" value="LNG1/2"/>
</dbReference>
<dbReference type="PANTHER" id="PTHR31680">
    <property type="entry name" value="LONGIFOLIA PROTEIN"/>
    <property type="match status" value="1"/>
</dbReference>
<dbReference type="PANTHER" id="PTHR31680:SF15">
    <property type="entry name" value="PROTEIN LONGIFOLIA 2"/>
    <property type="match status" value="1"/>
</dbReference>
<dbReference type="Pfam" id="PF14309">
    <property type="entry name" value="DUF4378"/>
    <property type="match status" value="1"/>
</dbReference>
<name>LNG2_ARATH</name>
<protein>
    <recommendedName>
        <fullName>Protein LONGIFOLIA 2</fullName>
    </recommendedName>
    <alternativeName>
        <fullName>Protein TON1 RECRUITING MOTIF 1</fullName>
    </alternativeName>
</protein>
<reference key="1">
    <citation type="journal article" date="2000" name="Nature">
        <title>Sequence and analysis of chromosome 3 of the plant Arabidopsis thaliana.</title>
        <authorList>
            <person name="Salanoubat M."/>
            <person name="Lemcke K."/>
            <person name="Rieger M."/>
            <person name="Ansorge W."/>
            <person name="Unseld M."/>
            <person name="Fartmann B."/>
            <person name="Valle G."/>
            <person name="Bloecker H."/>
            <person name="Perez-Alonso M."/>
            <person name="Obermaier B."/>
            <person name="Delseny M."/>
            <person name="Boutry M."/>
            <person name="Grivell L.A."/>
            <person name="Mache R."/>
            <person name="Puigdomenech P."/>
            <person name="De Simone V."/>
            <person name="Choisne N."/>
            <person name="Artiguenave F."/>
            <person name="Robert C."/>
            <person name="Brottier P."/>
            <person name="Wincker P."/>
            <person name="Cattolico L."/>
            <person name="Weissenbach J."/>
            <person name="Saurin W."/>
            <person name="Quetier F."/>
            <person name="Schaefer M."/>
            <person name="Mueller-Auer S."/>
            <person name="Gabel C."/>
            <person name="Fuchs M."/>
            <person name="Benes V."/>
            <person name="Wurmbach E."/>
            <person name="Drzonek H."/>
            <person name="Erfle H."/>
            <person name="Jordan N."/>
            <person name="Bangert S."/>
            <person name="Wiedelmann R."/>
            <person name="Kranz H."/>
            <person name="Voss H."/>
            <person name="Holland R."/>
            <person name="Brandt P."/>
            <person name="Nyakatura G."/>
            <person name="Vezzi A."/>
            <person name="D'Angelo M."/>
            <person name="Pallavicini A."/>
            <person name="Toppo S."/>
            <person name="Simionati B."/>
            <person name="Conrad A."/>
            <person name="Hornischer K."/>
            <person name="Kauer G."/>
            <person name="Loehnert T.-H."/>
            <person name="Nordsiek G."/>
            <person name="Reichelt J."/>
            <person name="Scharfe M."/>
            <person name="Schoen O."/>
            <person name="Bargues M."/>
            <person name="Terol J."/>
            <person name="Climent J."/>
            <person name="Navarro P."/>
            <person name="Collado C."/>
            <person name="Perez-Perez A."/>
            <person name="Ottenwaelder B."/>
            <person name="Duchemin D."/>
            <person name="Cooke R."/>
            <person name="Laudie M."/>
            <person name="Berger-Llauro C."/>
            <person name="Purnelle B."/>
            <person name="Masuy D."/>
            <person name="de Haan M."/>
            <person name="Maarse A.C."/>
            <person name="Alcaraz J.-P."/>
            <person name="Cottet A."/>
            <person name="Casacuberta E."/>
            <person name="Monfort A."/>
            <person name="Argiriou A."/>
            <person name="Flores M."/>
            <person name="Liguori R."/>
            <person name="Vitale D."/>
            <person name="Mannhaupt G."/>
            <person name="Haase D."/>
            <person name="Schoof H."/>
            <person name="Rudd S."/>
            <person name="Zaccaria P."/>
            <person name="Mewes H.-W."/>
            <person name="Mayer K.F.X."/>
            <person name="Kaul S."/>
            <person name="Town C.D."/>
            <person name="Koo H.L."/>
            <person name="Tallon L.J."/>
            <person name="Jenkins J."/>
            <person name="Rooney T."/>
            <person name="Rizzo M."/>
            <person name="Walts A."/>
            <person name="Utterback T."/>
            <person name="Fujii C.Y."/>
            <person name="Shea T.P."/>
            <person name="Creasy T.H."/>
            <person name="Haas B."/>
            <person name="Maiti R."/>
            <person name="Wu D."/>
            <person name="Peterson J."/>
            <person name="Van Aken S."/>
            <person name="Pai G."/>
            <person name="Militscher J."/>
            <person name="Sellers P."/>
            <person name="Gill J.E."/>
            <person name="Feldblyum T.V."/>
            <person name="Preuss D."/>
            <person name="Lin X."/>
            <person name="Nierman W.C."/>
            <person name="Salzberg S.L."/>
            <person name="White O."/>
            <person name="Venter J.C."/>
            <person name="Fraser C.M."/>
            <person name="Kaneko T."/>
            <person name="Nakamura Y."/>
            <person name="Sato S."/>
            <person name="Kato T."/>
            <person name="Asamizu E."/>
            <person name="Sasamoto S."/>
            <person name="Kimura T."/>
            <person name="Idesawa K."/>
            <person name="Kawashima K."/>
            <person name="Kishida Y."/>
            <person name="Kiyokawa C."/>
            <person name="Kohara M."/>
            <person name="Matsumoto M."/>
            <person name="Matsuno A."/>
            <person name="Muraki A."/>
            <person name="Nakayama S."/>
            <person name="Nakazaki N."/>
            <person name="Shinpo S."/>
            <person name="Takeuchi C."/>
            <person name="Wada T."/>
            <person name="Watanabe A."/>
            <person name="Yamada M."/>
            <person name="Yasuda M."/>
            <person name="Tabata S."/>
        </authorList>
    </citation>
    <scope>NUCLEOTIDE SEQUENCE [LARGE SCALE GENOMIC DNA]</scope>
    <source>
        <strain>cv. Columbia</strain>
    </source>
</reference>
<reference key="2">
    <citation type="journal article" date="2017" name="Plant J.">
        <title>Araport11: a complete reannotation of the Arabidopsis thaliana reference genome.</title>
        <authorList>
            <person name="Cheng C.Y."/>
            <person name="Krishnakumar V."/>
            <person name="Chan A.P."/>
            <person name="Thibaud-Nissen F."/>
            <person name="Schobel S."/>
            <person name="Town C.D."/>
        </authorList>
    </citation>
    <scope>GENOME REANNOTATION</scope>
    <source>
        <strain>cv. Columbia</strain>
    </source>
</reference>
<reference key="3">
    <citation type="journal article" date="2003" name="Science">
        <title>Empirical analysis of transcriptional activity in the Arabidopsis genome.</title>
        <authorList>
            <person name="Yamada K."/>
            <person name="Lim J."/>
            <person name="Dale J.M."/>
            <person name="Chen H."/>
            <person name="Shinn P."/>
            <person name="Palm C.J."/>
            <person name="Southwick A.M."/>
            <person name="Wu H.C."/>
            <person name="Kim C.J."/>
            <person name="Nguyen M."/>
            <person name="Pham P.K."/>
            <person name="Cheuk R.F."/>
            <person name="Karlin-Newmann G."/>
            <person name="Liu S.X."/>
            <person name="Lam B."/>
            <person name="Sakano H."/>
            <person name="Wu T."/>
            <person name="Yu G."/>
            <person name="Miranda M."/>
            <person name="Quach H.L."/>
            <person name="Tripp M."/>
            <person name="Chang C.H."/>
            <person name="Lee J.M."/>
            <person name="Toriumi M.J."/>
            <person name="Chan M.M."/>
            <person name="Tang C.C."/>
            <person name="Onodera C.S."/>
            <person name="Deng J.M."/>
            <person name="Akiyama K."/>
            <person name="Ansari Y."/>
            <person name="Arakawa T."/>
            <person name="Banh J."/>
            <person name="Banno F."/>
            <person name="Bowser L."/>
            <person name="Brooks S.Y."/>
            <person name="Carninci P."/>
            <person name="Chao Q."/>
            <person name="Choy N."/>
            <person name="Enju A."/>
            <person name="Goldsmith A.D."/>
            <person name="Gurjal M."/>
            <person name="Hansen N.F."/>
            <person name="Hayashizaki Y."/>
            <person name="Johnson-Hopson C."/>
            <person name="Hsuan V.W."/>
            <person name="Iida K."/>
            <person name="Karnes M."/>
            <person name="Khan S."/>
            <person name="Koesema E."/>
            <person name="Ishida J."/>
            <person name="Jiang P.X."/>
            <person name="Jones T."/>
            <person name="Kawai J."/>
            <person name="Kamiya A."/>
            <person name="Meyers C."/>
            <person name="Nakajima M."/>
            <person name="Narusaka M."/>
            <person name="Seki M."/>
            <person name="Sakurai T."/>
            <person name="Satou M."/>
            <person name="Tamse R."/>
            <person name="Vaysberg M."/>
            <person name="Wallender E.K."/>
            <person name="Wong C."/>
            <person name="Yamamura Y."/>
            <person name="Yuan S."/>
            <person name="Shinozaki K."/>
            <person name="Davis R.W."/>
            <person name="Theologis A."/>
            <person name="Ecker J.R."/>
        </authorList>
    </citation>
    <scope>NUCLEOTIDE SEQUENCE [LARGE SCALE MRNA]</scope>
    <source>
        <strain>cv. Columbia</strain>
    </source>
</reference>
<reference key="4">
    <citation type="submission" date="2002-03" db="EMBL/GenBank/DDBJ databases">
        <title>Full-length cDNA from Arabidopsis thaliana.</title>
        <authorList>
            <person name="Brover V.V."/>
            <person name="Troukhan M.E."/>
            <person name="Alexandrov N.A."/>
            <person name="Lu Y.-P."/>
            <person name="Flavell R.B."/>
            <person name="Feldmann K.A."/>
        </authorList>
    </citation>
    <scope>NUCLEOTIDE SEQUENCE [LARGE SCALE MRNA] OF 448-905</scope>
</reference>
<reference key="5">
    <citation type="journal article" date="2006" name="Development">
        <title>LONGIFOLIA1 and LONGIFOLIA2, two homologous genes, regulate longitudinal cell elongation in Arabidopsis.</title>
        <authorList>
            <person name="Lee Y.K."/>
            <person name="Kim G.T."/>
            <person name="Kim I.J."/>
            <person name="Park J."/>
            <person name="Kwak S.S."/>
            <person name="Choi G."/>
            <person name="Chung W.I."/>
        </authorList>
    </citation>
    <scope>FUNCTION</scope>
    <scope>TISSUE SPECIFICITY</scope>
    <scope>DISRUPTION PHENOTYPE</scope>
</reference>
<reference key="6">
    <citation type="journal article" date="2012" name="Plant Cell">
        <title>The Arabidopsis TRM1-TON1 interaction reveals a recruitment network common to plant cortical microtubule arrays and eukaryotic centrosomes.</title>
        <authorList>
            <person name="Drevensek S."/>
            <person name="Goussot M."/>
            <person name="Duroc Y."/>
            <person name="Christodoulidou A."/>
            <person name="Steyaert S."/>
            <person name="Schaefer E."/>
            <person name="Duvernois E."/>
            <person name="Grandjean O."/>
            <person name="Vantard M."/>
            <person name="Bouchez D."/>
            <person name="Pastuglia M."/>
        </authorList>
    </citation>
    <scope>FUNCTION</scope>
    <scope>INTERACTION WITH TON1A AND TON1B</scope>
    <scope>SUBCELLULAR LOCATION</scope>
</reference>
<feature type="chain" id="PRO_0000420919" description="Protein LONGIFOLIA 2">
    <location>
        <begin position="1"/>
        <end position="905"/>
    </location>
</feature>
<feature type="region of interest" description="Disordered" evidence="1">
    <location>
        <begin position="42"/>
        <end position="136"/>
    </location>
</feature>
<feature type="region of interest" description="Disordered" evidence="1">
    <location>
        <begin position="232"/>
        <end position="268"/>
    </location>
</feature>
<feature type="region of interest" description="Disordered" evidence="1">
    <location>
        <begin position="285"/>
        <end position="315"/>
    </location>
</feature>
<feature type="region of interest" description="Disordered" evidence="1">
    <location>
        <begin position="432"/>
        <end position="585"/>
    </location>
</feature>
<feature type="region of interest" description="Disordered" evidence="1">
    <location>
        <begin position="606"/>
        <end position="626"/>
    </location>
</feature>
<feature type="region of interest" description="Disordered" evidence="1">
    <location>
        <begin position="690"/>
        <end position="711"/>
    </location>
</feature>
<feature type="compositionally biased region" description="Basic and acidic residues" evidence="1">
    <location>
        <begin position="65"/>
        <end position="74"/>
    </location>
</feature>
<feature type="compositionally biased region" description="Low complexity" evidence="1">
    <location>
        <begin position="90"/>
        <end position="117"/>
    </location>
</feature>
<feature type="compositionally biased region" description="Basic and acidic residues" evidence="1">
    <location>
        <begin position="286"/>
        <end position="296"/>
    </location>
</feature>
<feature type="compositionally biased region" description="Polar residues" evidence="1">
    <location>
        <begin position="432"/>
        <end position="461"/>
    </location>
</feature>
<feature type="compositionally biased region" description="Polar residues" evidence="1">
    <location>
        <begin position="477"/>
        <end position="487"/>
    </location>
</feature>
<feature type="compositionally biased region" description="Polar residues" evidence="1">
    <location>
        <begin position="501"/>
        <end position="516"/>
    </location>
</feature>
<feature type="compositionally biased region" description="Basic and acidic residues" evidence="1">
    <location>
        <begin position="566"/>
        <end position="581"/>
    </location>
</feature>
<feature type="sequence conflict" description="In Ref. 3; AAL07210." evidence="4" ref="3">
    <original>S</original>
    <variation>Y</variation>
    <location>
        <position position="268"/>
    </location>
</feature>
<feature type="sequence conflict" description="In Ref. 4; AAM64269." evidence="4" ref="4">
    <original>E</original>
    <variation>K</variation>
    <location>
        <position position="547"/>
    </location>
</feature>
<feature type="sequence conflict" description="In Ref. 4; AAM64269." evidence="4" ref="4">
    <original>R</original>
    <variation>S</variation>
    <location>
        <position position="574"/>
    </location>
</feature>
<accession>Q9S823</accession>
<accession>Q8LD57</accession>
<accession>Q940B7</accession>
<proteinExistence type="evidence at protein level"/>
<organism>
    <name type="scientific">Arabidopsis thaliana</name>
    <name type="common">Mouse-ear cress</name>
    <dbReference type="NCBI Taxonomy" id="3702"/>
    <lineage>
        <taxon>Eukaryota</taxon>
        <taxon>Viridiplantae</taxon>
        <taxon>Streptophyta</taxon>
        <taxon>Embryophyta</taxon>
        <taxon>Tracheophyta</taxon>
        <taxon>Spermatophyta</taxon>
        <taxon>Magnoliopsida</taxon>
        <taxon>eudicotyledons</taxon>
        <taxon>Gunneridae</taxon>
        <taxon>Pentapetalae</taxon>
        <taxon>rosids</taxon>
        <taxon>malvids</taxon>
        <taxon>Brassicales</taxon>
        <taxon>Brassicaceae</taxon>
        <taxon>Camelineae</taxon>
        <taxon>Arabidopsis</taxon>
    </lineage>
</organism>
<comment type="function">
    <text evidence="2 3">In association with LNG1, regulates leaf morphology by promoting longitudinal polar cell elongation independently of ROT3. Associates with microtubules and recruits TON1A and TON1B to the cytoskeleton through its C-terminus.</text>
</comment>
<comment type="subunit">
    <text evidence="3">Interacts (via C-terminus) with TON1A and TON1B.</text>
</comment>
<comment type="subcellular location">
    <subcellularLocation>
        <location evidence="3">Cytoplasm</location>
        <location evidence="3">Cytoskeleton</location>
    </subcellularLocation>
    <text>Localizes to cortical microtubules arrays.</text>
</comment>
<comment type="disruption phenotype">
    <text evidence="2">No visible phenotype under normal growth conditions, but the lng1 and lng2 double mutant shows reduced length of cotyledons, rosette leaves, siliques and flowers.</text>
</comment>
<comment type="sequence caution" evidence="4">
    <conflict type="erroneous initiation">
        <sequence resource="EMBL-CDS" id="AAM64269"/>
    </conflict>
    <text>Truncated N-terminus.</text>
</comment>
<keyword id="KW-0963">Cytoplasm</keyword>
<keyword id="KW-0206">Cytoskeleton</keyword>
<keyword id="KW-1185">Reference proteome</keyword>